<protein>
    <recommendedName>
        <fullName evidence="1">Ribosomal RNA small subunit methyltransferase A</fullName>
        <ecNumber evidence="1">2.1.1.182</ecNumber>
    </recommendedName>
    <alternativeName>
        <fullName evidence="1">16S rRNA (adenine(1518)-N(6)/adenine(1519)-N(6))-dimethyltransferase</fullName>
    </alternativeName>
    <alternativeName>
        <fullName evidence="1">16S rRNA dimethyladenosine transferase</fullName>
    </alternativeName>
    <alternativeName>
        <fullName evidence="1">16S rRNA dimethylase</fullName>
    </alternativeName>
    <alternativeName>
        <fullName evidence="1">S-adenosylmethionine-6-N', N'-adenosyl(rRNA) dimethyltransferase</fullName>
    </alternativeName>
</protein>
<gene>
    <name evidence="1" type="primary">rsmA</name>
    <name evidence="1" type="synonym">ksgA</name>
    <name type="ordered locus">SeD_A0094</name>
</gene>
<name>RSMA_SALDC</name>
<dbReference type="EC" id="2.1.1.182" evidence="1"/>
<dbReference type="EMBL" id="CP001144">
    <property type="protein sequence ID" value="ACH75946.1"/>
    <property type="molecule type" value="Genomic_DNA"/>
</dbReference>
<dbReference type="RefSeq" id="WP_001065397.1">
    <property type="nucleotide sequence ID" value="NC_011205.1"/>
</dbReference>
<dbReference type="SMR" id="B5FI34"/>
<dbReference type="KEGG" id="sed:SeD_A0094"/>
<dbReference type="HOGENOM" id="CLU_041220_0_1_6"/>
<dbReference type="Proteomes" id="UP000008322">
    <property type="component" value="Chromosome"/>
</dbReference>
<dbReference type="GO" id="GO:0005829">
    <property type="term" value="C:cytosol"/>
    <property type="evidence" value="ECO:0007669"/>
    <property type="project" value="TreeGrafter"/>
</dbReference>
<dbReference type="GO" id="GO:0052908">
    <property type="term" value="F:16S rRNA (adenine(1518)-N(6)/adenine(1519)-N(6))-dimethyltransferase activity"/>
    <property type="evidence" value="ECO:0007669"/>
    <property type="project" value="UniProtKB-EC"/>
</dbReference>
<dbReference type="GO" id="GO:0003723">
    <property type="term" value="F:RNA binding"/>
    <property type="evidence" value="ECO:0007669"/>
    <property type="project" value="UniProtKB-KW"/>
</dbReference>
<dbReference type="FunFam" id="1.10.8.100:FF:000001">
    <property type="entry name" value="Ribosomal RNA small subunit methyltransferase A"/>
    <property type="match status" value="1"/>
</dbReference>
<dbReference type="FunFam" id="3.40.50.150:FF:000006">
    <property type="entry name" value="Ribosomal RNA small subunit methyltransferase A"/>
    <property type="match status" value="1"/>
</dbReference>
<dbReference type="Gene3D" id="1.10.8.100">
    <property type="entry name" value="Ribosomal RNA adenine dimethylase-like, domain 2"/>
    <property type="match status" value="1"/>
</dbReference>
<dbReference type="Gene3D" id="3.40.50.150">
    <property type="entry name" value="Vaccinia Virus protein VP39"/>
    <property type="match status" value="1"/>
</dbReference>
<dbReference type="HAMAP" id="MF_00607">
    <property type="entry name" value="16SrRNA_methyltr_A"/>
    <property type="match status" value="1"/>
</dbReference>
<dbReference type="InterPro" id="IPR001737">
    <property type="entry name" value="KsgA/Erm"/>
</dbReference>
<dbReference type="InterPro" id="IPR023165">
    <property type="entry name" value="rRNA_Ade_diMease-like_C"/>
</dbReference>
<dbReference type="InterPro" id="IPR020596">
    <property type="entry name" value="rRNA_Ade_Mease_Trfase_CS"/>
</dbReference>
<dbReference type="InterPro" id="IPR020598">
    <property type="entry name" value="rRNA_Ade_methylase_Trfase_N"/>
</dbReference>
<dbReference type="InterPro" id="IPR011530">
    <property type="entry name" value="rRNA_adenine_dimethylase"/>
</dbReference>
<dbReference type="InterPro" id="IPR029063">
    <property type="entry name" value="SAM-dependent_MTases_sf"/>
</dbReference>
<dbReference type="NCBIfam" id="TIGR00755">
    <property type="entry name" value="ksgA"/>
    <property type="match status" value="1"/>
</dbReference>
<dbReference type="PANTHER" id="PTHR11727">
    <property type="entry name" value="DIMETHYLADENOSINE TRANSFERASE"/>
    <property type="match status" value="1"/>
</dbReference>
<dbReference type="PANTHER" id="PTHR11727:SF7">
    <property type="entry name" value="DIMETHYLADENOSINE TRANSFERASE-RELATED"/>
    <property type="match status" value="1"/>
</dbReference>
<dbReference type="Pfam" id="PF00398">
    <property type="entry name" value="RrnaAD"/>
    <property type="match status" value="1"/>
</dbReference>
<dbReference type="SMART" id="SM00650">
    <property type="entry name" value="rADc"/>
    <property type="match status" value="1"/>
</dbReference>
<dbReference type="SUPFAM" id="SSF53335">
    <property type="entry name" value="S-adenosyl-L-methionine-dependent methyltransferases"/>
    <property type="match status" value="1"/>
</dbReference>
<dbReference type="PROSITE" id="PS01131">
    <property type="entry name" value="RRNA_A_DIMETH"/>
    <property type="match status" value="1"/>
</dbReference>
<dbReference type="PROSITE" id="PS51689">
    <property type="entry name" value="SAM_RNA_A_N6_MT"/>
    <property type="match status" value="1"/>
</dbReference>
<organism>
    <name type="scientific">Salmonella dublin (strain CT_02021853)</name>
    <dbReference type="NCBI Taxonomy" id="439851"/>
    <lineage>
        <taxon>Bacteria</taxon>
        <taxon>Pseudomonadati</taxon>
        <taxon>Pseudomonadota</taxon>
        <taxon>Gammaproteobacteria</taxon>
        <taxon>Enterobacterales</taxon>
        <taxon>Enterobacteriaceae</taxon>
        <taxon>Salmonella</taxon>
    </lineage>
</organism>
<comment type="function">
    <text evidence="1">Specifically dimethylates two adjacent adenosines (A1518 and A1519) in the loop of a conserved hairpin near the 3'-end of 16S rRNA in the 30S particle. May play a critical role in biogenesis of 30S subunits.</text>
</comment>
<comment type="catalytic activity">
    <reaction evidence="1">
        <text>adenosine(1518)/adenosine(1519) in 16S rRNA + 4 S-adenosyl-L-methionine = N(6)-dimethyladenosine(1518)/N(6)-dimethyladenosine(1519) in 16S rRNA + 4 S-adenosyl-L-homocysteine + 4 H(+)</text>
        <dbReference type="Rhea" id="RHEA:19609"/>
        <dbReference type="Rhea" id="RHEA-COMP:10232"/>
        <dbReference type="Rhea" id="RHEA-COMP:10233"/>
        <dbReference type="ChEBI" id="CHEBI:15378"/>
        <dbReference type="ChEBI" id="CHEBI:57856"/>
        <dbReference type="ChEBI" id="CHEBI:59789"/>
        <dbReference type="ChEBI" id="CHEBI:74411"/>
        <dbReference type="ChEBI" id="CHEBI:74493"/>
        <dbReference type="EC" id="2.1.1.182"/>
    </reaction>
</comment>
<comment type="subcellular location">
    <subcellularLocation>
        <location evidence="1">Cytoplasm</location>
    </subcellularLocation>
</comment>
<comment type="similarity">
    <text evidence="1">Belongs to the class I-like SAM-binding methyltransferase superfamily. rRNA adenine N(6)-methyltransferase family. RsmA subfamily.</text>
</comment>
<sequence length="273" mass="30516">MNNRVHQGHLARKRFGQNFLNDRFVIDSIVSAINPQKGQAMVEIGPGLAALTEPVGERLDKLTVIELDRDLAARLQTHPFLGPKLTIYQQDAMTMNFGELSAQLGQPLRVFGNLPYNISTPLMFHLFSYTDAIADMHFMLQKEVVNRLVAGPNSKAYGRLSVMAQYYCQVIPVLEVPPSAFTPPPKVDSAVVRLVPHATMPYPVKDIRVLSRITTEAFNQRRKTIRNSLGNLFSVETLTEMGIDPAMRAENISVAQYCQMANYLSENAPLKES</sequence>
<keyword id="KW-0963">Cytoplasm</keyword>
<keyword id="KW-0489">Methyltransferase</keyword>
<keyword id="KW-0694">RNA-binding</keyword>
<keyword id="KW-0698">rRNA processing</keyword>
<keyword id="KW-0949">S-adenosyl-L-methionine</keyword>
<keyword id="KW-0808">Transferase</keyword>
<evidence type="ECO:0000255" key="1">
    <source>
        <dbReference type="HAMAP-Rule" id="MF_00607"/>
    </source>
</evidence>
<feature type="chain" id="PRO_1000130314" description="Ribosomal RNA small subunit methyltransferase A">
    <location>
        <begin position="1"/>
        <end position="273"/>
    </location>
</feature>
<feature type="binding site" evidence="1">
    <location>
        <position position="18"/>
    </location>
    <ligand>
        <name>S-adenosyl-L-methionine</name>
        <dbReference type="ChEBI" id="CHEBI:59789"/>
    </ligand>
</feature>
<feature type="binding site" evidence="1">
    <location>
        <position position="20"/>
    </location>
    <ligand>
        <name>S-adenosyl-L-methionine</name>
        <dbReference type="ChEBI" id="CHEBI:59789"/>
    </ligand>
</feature>
<feature type="binding site" evidence="1">
    <location>
        <position position="45"/>
    </location>
    <ligand>
        <name>S-adenosyl-L-methionine</name>
        <dbReference type="ChEBI" id="CHEBI:59789"/>
    </ligand>
</feature>
<feature type="binding site" evidence="1">
    <location>
        <position position="66"/>
    </location>
    <ligand>
        <name>S-adenosyl-L-methionine</name>
        <dbReference type="ChEBI" id="CHEBI:59789"/>
    </ligand>
</feature>
<feature type="binding site" evidence="1">
    <location>
        <position position="91"/>
    </location>
    <ligand>
        <name>S-adenosyl-L-methionine</name>
        <dbReference type="ChEBI" id="CHEBI:59789"/>
    </ligand>
</feature>
<feature type="binding site" evidence="1">
    <location>
        <position position="113"/>
    </location>
    <ligand>
        <name>S-adenosyl-L-methionine</name>
        <dbReference type="ChEBI" id="CHEBI:59789"/>
    </ligand>
</feature>
<reference key="1">
    <citation type="journal article" date="2011" name="J. Bacteriol.">
        <title>Comparative genomics of 28 Salmonella enterica isolates: evidence for CRISPR-mediated adaptive sublineage evolution.</title>
        <authorList>
            <person name="Fricke W.F."/>
            <person name="Mammel M.K."/>
            <person name="McDermott P.F."/>
            <person name="Tartera C."/>
            <person name="White D.G."/>
            <person name="Leclerc J.E."/>
            <person name="Ravel J."/>
            <person name="Cebula T.A."/>
        </authorList>
    </citation>
    <scope>NUCLEOTIDE SEQUENCE [LARGE SCALE GENOMIC DNA]</scope>
    <source>
        <strain>CT_02021853</strain>
    </source>
</reference>
<proteinExistence type="inferred from homology"/>
<accession>B5FI34</accession>